<dbReference type="EC" id="2.1.3.2" evidence="1"/>
<dbReference type="EMBL" id="AE001437">
    <property type="protein sequence ID" value="AAK80601.1"/>
    <property type="molecule type" value="Genomic_DNA"/>
</dbReference>
<dbReference type="PIR" id="F97226">
    <property type="entry name" value="F97226"/>
</dbReference>
<dbReference type="RefSeq" id="NP_349261.1">
    <property type="nucleotide sequence ID" value="NC_003030.1"/>
</dbReference>
<dbReference type="RefSeq" id="WP_010965942.1">
    <property type="nucleotide sequence ID" value="NC_003030.1"/>
</dbReference>
<dbReference type="SMR" id="Q97FS3"/>
<dbReference type="STRING" id="272562.CA_C2654"/>
<dbReference type="GeneID" id="44999122"/>
<dbReference type="KEGG" id="cac:CA_C2654"/>
<dbReference type="PATRIC" id="fig|272562.8.peg.2843"/>
<dbReference type="eggNOG" id="COG0540">
    <property type="taxonomic scope" value="Bacteria"/>
</dbReference>
<dbReference type="HOGENOM" id="CLU_043846_1_2_9"/>
<dbReference type="OrthoDB" id="9774690at2"/>
<dbReference type="UniPathway" id="UPA00070">
    <property type="reaction ID" value="UER00116"/>
</dbReference>
<dbReference type="Proteomes" id="UP000000814">
    <property type="component" value="Chromosome"/>
</dbReference>
<dbReference type="GO" id="GO:0016597">
    <property type="term" value="F:amino acid binding"/>
    <property type="evidence" value="ECO:0007669"/>
    <property type="project" value="InterPro"/>
</dbReference>
<dbReference type="GO" id="GO:0004070">
    <property type="term" value="F:aspartate carbamoyltransferase activity"/>
    <property type="evidence" value="ECO:0007669"/>
    <property type="project" value="UniProtKB-UniRule"/>
</dbReference>
<dbReference type="GO" id="GO:0006207">
    <property type="term" value="P:'de novo' pyrimidine nucleobase biosynthetic process"/>
    <property type="evidence" value="ECO:0007669"/>
    <property type="project" value="InterPro"/>
</dbReference>
<dbReference type="GO" id="GO:0044205">
    <property type="term" value="P:'de novo' UMP biosynthetic process"/>
    <property type="evidence" value="ECO:0007669"/>
    <property type="project" value="UniProtKB-UniRule"/>
</dbReference>
<dbReference type="GO" id="GO:0006520">
    <property type="term" value="P:amino acid metabolic process"/>
    <property type="evidence" value="ECO:0007669"/>
    <property type="project" value="InterPro"/>
</dbReference>
<dbReference type="FunFam" id="3.40.50.1370:FF:000002">
    <property type="entry name" value="Aspartate carbamoyltransferase 2"/>
    <property type="match status" value="1"/>
</dbReference>
<dbReference type="Gene3D" id="3.40.50.1370">
    <property type="entry name" value="Aspartate/ornithine carbamoyltransferase"/>
    <property type="match status" value="2"/>
</dbReference>
<dbReference type="HAMAP" id="MF_00001">
    <property type="entry name" value="Asp_carb_tr"/>
    <property type="match status" value="1"/>
</dbReference>
<dbReference type="InterPro" id="IPR006132">
    <property type="entry name" value="Asp/Orn_carbamoyltranf_P-bd"/>
</dbReference>
<dbReference type="InterPro" id="IPR006130">
    <property type="entry name" value="Asp/Orn_carbamoylTrfase"/>
</dbReference>
<dbReference type="InterPro" id="IPR036901">
    <property type="entry name" value="Asp/Orn_carbamoylTrfase_sf"/>
</dbReference>
<dbReference type="InterPro" id="IPR002082">
    <property type="entry name" value="Asp_carbamoyltransf"/>
</dbReference>
<dbReference type="InterPro" id="IPR006131">
    <property type="entry name" value="Asp_carbamoyltransf_Asp/Orn-bd"/>
</dbReference>
<dbReference type="NCBIfam" id="TIGR00670">
    <property type="entry name" value="asp_carb_tr"/>
    <property type="match status" value="1"/>
</dbReference>
<dbReference type="NCBIfam" id="NF002032">
    <property type="entry name" value="PRK00856.1"/>
    <property type="match status" value="1"/>
</dbReference>
<dbReference type="PANTHER" id="PTHR45753:SF6">
    <property type="entry name" value="ASPARTATE CARBAMOYLTRANSFERASE"/>
    <property type="match status" value="1"/>
</dbReference>
<dbReference type="PANTHER" id="PTHR45753">
    <property type="entry name" value="ORNITHINE CARBAMOYLTRANSFERASE, MITOCHONDRIAL"/>
    <property type="match status" value="1"/>
</dbReference>
<dbReference type="Pfam" id="PF00185">
    <property type="entry name" value="OTCace"/>
    <property type="match status" value="1"/>
</dbReference>
<dbReference type="Pfam" id="PF02729">
    <property type="entry name" value="OTCace_N"/>
    <property type="match status" value="1"/>
</dbReference>
<dbReference type="PRINTS" id="PR00100">
    <property type="entry name" value="AOTCASE"/>
</dbReference>
<dbReference type="PRINTS" id="PR00101">
    <property type="entry name" value="ATCASE"/>
</dbReference>
<dbReference type="SUPFAM" id="SSF53671">
    <property type="entry name" value="Aspartate/ornithine carbamoyltransferase"/>
    <property type="match status" value="1"/>
</dbReference>
<dbReference type="PROSITE" id="PS00097">
    <property type="entry name" value="CARBAMOYLTRANSFERASE"/>
    <property type="match status" value="1"/>
</dbReference>
<evidence type="ECO:0000255" key="1">
    <source>
        <dbReference type="HAMAP-Rule" id="MF_00001"/>
    </source>
</evidence>
<reference key="1">
    <citation type="journal article" date="2001" name="J. Bacteriol.">
        <title>Genome sequence and comparative analysis of the solvent-producing bacterium Clostridium acetobutylicum.</title>
        <authorList>
            <person name="Noelling J."/>
            <person name="Breton G."/>
            <person name="Omelchenko M.V."/>
            <person name="Makarova K.S."/>
            <person name="Zeng Q."/>
            <person name="Gibson R."/>
            <person name="Lee H.M."/>
            <person name="Dubois J."/>
            <person name="Qiu D."/>
            <person name="Hitti J."/>
            <person name="Wolf Y.I."/>
            <person name="Tatusov R.L."/>
            <person name="Sabathe F."/>
            <person name="Doucette-Stamm L.A."/>
            <person name="Soucaille P."/>
            <person name="Daly M.J."/>
            <person name="Bennett G.N."/>
            <person name="Koonin E.V."/>
            <person name="Smith D.R."/>
        </authorList>
    </citation>
    <scope>NUCLEOTIDE SEQUENCE [LARGE SCALE GENOMIC DNA]</scope>
    <source>
        <strain>ATCC 824 / DSM 792 / JCM 1419 / IAM 19013 / LMG 5710 / NBRC 13948 / NRRL B-527 / VKM B-1787 / 2291 / W</strain>
    </source>
</reference>
<feature type="chain" id="PRO_0000113119" description="Aspartate carbamoyltransferase catalytic subunit">
    <location>
        <begin position="1"/>
        <end position="307"/>
    </location>
</feature>
<feature type="binding site" evidence="1">
    <location>
        <position position="54"/>
    </location>
    <ligand>
        <name>carbamoyl phosphate</name>
        <dbReference type="ChEBI" id="CHEBI:58228"/>
    </ligand>
</feature>
<feature type="binding site" evidence="1">
    <location>
        <position position="55"/>
    </location>
    <ligand>
        <name>carbamoyl phosphate</name>
        <dbReference type="ChEBI" id="CHEBI:58228"/>
    </ligand>
</feature>
<feature type="binding site" evidence="1">
    <location>
        <position position="83"/>
    </location>
    <ligand>
        <name>L-aspartate</name>
        <dbReference type="ChEBI" id="CHEBI:29991"/>
    </ligand>
</feature>
<feature type="binding site" evidence="1">
    <location>
        <position position="104"/>
    </location>
    <ligand>
        <name>carbamoyl phosphate</name>
        <dbReference type="ChEBI" id="CHEBI:58228"/>
    </ligand>
</feature>
<feature type="binding site" evidence="1">
    <location>
        <position position="132"/>
    </location>
    <ligand>
        <name>carbamoyl phosphate</name>
        <dbReference type="ChEBI" id="CHEBI:58228"/>
    </ligand>
</feature>
<feature type="binding site" evidence="1">
    <location>
        <position position="135"/>
    </location>
    <ligand>
        <name>carbamoyl phosphate</name>
        <dbReference type="ChEBI" id="CHEBI:58228"/>
    </ligand>
</feature>
<feature type="binding site" evidence="1">
    <location>
        <position position="165"/>
    </location>
    <ligand>
        <name>L-aspartate</name>
        <dbReference type="ChEBI" id="CHEBI:29991"/>
    </ligand>
</feature>
<feature type="binding site" evidence="1">
    <location>
        <position position="228"/>
    </location>
    <ligand>
        <name>L-aspartate</name>
        <dbReference type="ChEBI" id="CHEBI:29991"/>
    </ligand>
</feature>
<feature type="binding site" evidence="1">
    <location>
        <position position="267"/>
    </location>
    <ligand>
        <name>carbamoyl phosphate</name>
        <dbReference type="ChEBI" id="CHEBI:58228"/>
    </ligand>
</feature>
<feature type="binding site" evidence="1">
    <location>
        <position position="268"/>
    </location>
    <ligand>
        <name>carbamoyl phosphate</name>
        <dbReference type="ChEBI" id="CHEBI:58228"/>
    </ligand>
</feature>
<proteinExistence type="inferred from homology"/>
<organism>
    <name type="scientific">Clostridium acetobutylicum (strain ATCC 824 / DSM 792 / JCM 1419 / IAM 19013 / LMG 5710 / NBRC 13948 / NRRL B-527 / VKM B-1787 / 2291 / W)</name>
    <dbReference type="NCBI Taxonomy" id="272562"/>
    <lineage>
        <taxon>Bacteria</taxon>
        <taxon>Bacillati</taxon>
        <taxon>Bacillota</taxon>
        <taxon>Clostridia</taxon>
        <taxon>Eubacteriales</taxon>
        <taxon>Clostridiaceae</taxon>
        <taxon>Clostridium</taxon>
    </lineage>
</organism>
<protein>
    <recommendedName>
        <fullName evidence="1">Aspartate carbamoyltransferase catalytic subunit</fullName>
        <ecNumber evidence="1">2.1.3.2</ecNumber>
    </recommendedName>
    <alternativeName>
        <fullName evidence="1">Aspartate transcarbamylase</fullName>
        <shortName evidence="1">ATCase</shortName>
    </alternativeName>
</protein>
<gene>
    <name evidence="1" type="primary">pyrB</name>
    <name type="ordered locus">CA_C2654</name>
</gene>
<sequence>MLKGRSLIDPMDFTVDELEEIFKLADDIIACPKEYMHAAEGKILATLFYEPSTRTRFSFETAMLRLGGQVVGFSEPNSSSVSKGETIADTIRVVSCYADIAAMRHPKEGAPKVASMYSSIPVINAGDGGHQHPTQTLTDLLTMRRTKKRLSNLTIGMCGDLKFGRTVHSLIKAMSRYDNNKIVLISPDELKVPEYIKKEILDKNNIEYKEAKRIEDVIEELDVLYMTRVQKERFFNEEDYIRLKDSYILNENKLKTAKKDMIILHPLPRVNEISYEVDNDERAYYFKQAKNGMYVRMALMAKLMGVL</sequence>
<keyword id="KW-0665">Pyrimidine biosynthesis</keyword>
<keyword id="KW-1185">Reference proteome</keyword>
<keyword id="KW-0808">Transferase</keyword>
<comment type="function">
    <text evidence="1">Catalyzes the condensation of carbamoyl phosphate and aspartate to form carbamoyl aspartate and inorganic phosphate, the committed step in the de novo pyrimidine nucleotide biosynthesis pathway.</text>
</comment>
<comment type="catalytic activity">
    <reaction evidence="1">
        <text>carbamoyl phosphate + L-aspartate = N-carbamoyl-L-aspartate + phosphate + H(+)</text>
        <dbReference type="Rhea" id="RHEA:20013"/>
        <dbReference type="ChEBI" id="CHEBI:15378"/>
        <dbReference type="ChEBI" id="CHEBI:29991"/>
        <dbReference type="ChEBI" id="CHEBI:32814"/>
        <dbReference type="ChEBI" id="CHEBI:43474"/>
        <dbReference type="ChEBI" id="CHEBI:58228"/>
        <dbReference type="EC" id="2.1.3.2"/>
    </reaction>
</comment>
<comment type="pathway">
    <text evidence="1">Pyrimidine metabolism; UMP biosynthesis via de novo pathway; (S)-dihydroorotate from bicarbonate: step 2/3.</text>
</comment>
<comment type="subunit">
    <text evidence="1">Heterododecamer (2C3:3R2) of six catalytic PyrB chains organized as two trimers (C3), and six regulatory PyrI chains organized as three dimers (R2).</text>
</comment>
<comment type="similarity">
    <text evidence="1">Belongs to the aspartate/ornithine carbamoyltransferase superfamily. ATCase family.</text>
</comment>
<name>PYRB_CLOAB</name>
<accession>Q97FS3</accession>